<proteinExistence type="inferred from homology"/>
<feature type="signal peptide" evidence="4">
    <location>
        <begin position="1"/>
        <end position="20"/>
    </location>
</feature>
<feature type="chain" id="PRO_0000393709" description="Probable mannan endo-1,4-beta-mannosidase C">
    <location>
        <begin position="21"/>
        <end position="406"/>
    </location>
</feature>
<feature type="active site" description="Proton donor" evidence="3">
    <location>
        <position position="202"/>
    </location>
</feature>
<feature type="active site" description="Nucleophile" evidence="3">
    <location>
        <position position="320"/>
    </location>
</feature>
<feature type="binding site" evidence="2">
    <location>
        <position position="80"/>
    </location>
    <ligand>
        <name>substrate</name>
    </ligand>
</feature>
<feature type="binding site" evidence="2">
    <location>
        <position position="201"/>
    </location>
    <ligand>
        <name>substrate</name>
    </ligand>
</feature>
<feature type="binding site" evidence="2">
    <location>
        <position position="287"/>
    </location>
    <ligand>
        <name>substrate</name>
    </ligand>
</feature>
<feature type="binding site" evidence="2">
    <location>
        <position position="362"/>
    </location>
    <ligand>
        <name>substrate</name>
    </ligand>
</feature>
<feature type="glycosylation site" description="N-linked (GlcNAc...) asparagine" evidence="4">
    <location>
        <position position="58"/>
    </location>
</feature>
<feature type="glycosylation site" description="N-linked (GlcNAc...) asparagine" evidence="4">
    <location>
        <position position="86"/>
    </location>
</feature>
<feature type="glycosylation site" description="N-linked (GlcNAc...) asparagine" evidence="4">
    <location>
        <position position="114"/>
    </location>
</feature>
<feature type="glycosylation site" description="N-linked (GlcNAc...) asparagine" evidence="4">
    <location>
        <position position="338"/>
    </location>
</feature>
<gene>
    <name type="primary">manC</name>
    <name type="ORF">ATEG_09991</name>
</gene>
<sequence length="406" mass="45768">MLINFEKVLSLALLAGSVSGRKHVPRGFVTTSGMKFQLDGKDFYFAGSNAYYFPFNDNQTDVELGLAAAKQAGLTVFRTWGFNDKNATYIEGGLPAYGGEGAGTTEVVFQRWANGTSTIDLEPFDKVVNAAKNTGMKLVVALTNNWADYGGMDVYTINLGGQYHDDFYRLPAIKKAYKRYVKEMVTRYRDSPAIMAWELANEPRCGADGVRNLPRSADGCNPEVLTAWIDEMSTYIKKLDPHHLVTWGGEGGFNIESDDWAYNGADGGDFDNELALPNIDFGVFHSYPDWWSKTVSWTNQWIRDHAAAMRTGRKPVVHEEYGWLTPEARLEYLGTVSNITRLEAVGGWQQISVSEKMSDMYWQYGYSGYSYGRNHNDGFTIYLDDPEAKELVYKHAKEVKKLNRRH</sequence>
<organism>
    <name type="scientific">Aspergillus terreus (strain NIH 2624 / FGSC A1156)</name>
    <dbReference type="NCBI Taxonomy" id="341663"/>
    <lineage>
        <taxon>Eukaryota</taxon>
        <taxon>Fungi</taxon>
        <taxon>Dikarya</taxon>
        <taxon>Ascomycota</taxon>
        <taxon>Pezizomycotina</taxon>
        <taxon>Eurotiomycetes</taxon>
        <taxon>Eurotiomycetidae</taxon>
        <taxon>Eurotiales</taxon>
        <taxon>Aspergillaceae</taxon>
        <taxon>Aspergillus</taxon>
        <taxon>Aspergillus subgen. Circumdati</taxon>
    </lineage>
</organism>
<reference key="1">
    <citation type="submission" date="2005-09" db="EMBL/GenBank/DDBJ databases">
        <title>Annotation of the Aspergillus terreus NIH2624 genome.</title>
        <authorList>
            <person name="Birren B.W."/>
            <person name="Lander E.S."/>
            <person name="Galagan J.E."/>
            <person name="Nusbaum C."/>
            <person name="Devon K."/>
            <person name="Henn M."/>
            <person name="Ma L.-J."/>
            <person name="Jaffe D.B."/>
            <person name="Butler J."/>
            <person name="Alvarez P."/>
            <person name="Gnerre S."/>
            <person name="Grabherr M."/>
            <person name="Kleber M."/>
            <person name="Mauceli E.W."/>
            <person name="Brockman W."/>
            <person name="Rounsley S."/>
            <person name="Young S.K."/>
            <person name="LaButti K."/>
            <person name="Pushparaj V."/>
            <person name="DeCaprio D."/>
            <person name="Crawford M."/>
            <person name="Koehrsen M."/>
            <person name="Engels R."/>
            <person name="Montgomery P."/>
            <person name="Pearson M."/>
            <person name="Howarth C."/>
            <person name="Larson L."/>
            <person name="Luoma S."/>
            <person name="White J."/>
            <person name="Alvarado L."/>
            <person name="Kodira C.D."/>
            <person name="Zeng Q."/>
            <person name="Oleary S."/>
            <person name="Yandava C."/>
            <person name="Denning D.W."/>
            <person name="Nierman W.C."/>
            <person name="Milne T."/>
            <person name="Madden K."/>
        </authorList>
    </citation>
    <scope>NUCLEOTIDE SEQUENCE [LARGE SCALE GENOMIC DNA]</scope>
    <source>
        <strain>NIH 2624 / FGSC A1156</strain>
    </source>
</reference>
<comment type="function">
    <text evidence="1">Endo-1,4-mannanase, a crucial enzyme for depolymerization of seed galactomannans and wood galactoglucomannans.</text>
</comment>
<comment type="catalytic activity">
    <reaction>
        <text>Random hydrolysis of (1-&gt;4)-beta-D-mannosidic linkages in mannans, galactomannans and glucomannans.</text>
        <dbReference type="EC" id="3.2.1.78"/>
    </reaction>
</comment>
<comment type="subcellular location">
    <subcellularLocation>
        <location evidence="1">Secreted</location>
    </subcellularLocation>
</comment>
<comment type="similarity">
    <text evidence="5">Belongs to the glycosyl hydrolase 5 (cellulase A) family.</text>
</comment>
<evidence type="ECO:0000250" key="1"/>
<evidence type="ECO:0000250" key="2">
    <source>
        <dbReference type="UniProtKB" id="B4XC07"/>
    </source>
</evidence>
<evidence type="ECO:0000250" key="3">
    <source>
        <dbReference type="UniProtKB" id="Q99036"/>
    </source>
</evidence>
<evidence type="ECO:0000255" key="4"/>
<evidence type="ECO:0000305" key="5"/>
<keyword id="KW-0119">Carbohydrate metabolism</keyword>
<keyword id="KW-0325">Glycoprotein</keyword>
<keyword id="KW-0326">Glycosidase</keyword>
<keyword id="KW-0378">Hydrolase</keyword>
<keyword id="KW-1185">Reference proteome</keyword>
<keyword id="KW-0964">Secreted</keyword>
<keyword id="KW-0732">Signal</keyword>
<dbReference type="EC" id="3.2.1.78"/>
<dbReference type="EMBL" id="CH476609">
    <property type="protein sequence ID" value="EAU29440.1"/>
    <property type="molecule type" value="Genomic_DNA"/>
</dbReference>
<dbReference type="RefSeq" id="XP_001209293.1">
    <property type="nucleotide sequence ID" value="XM_001209293.1"/>
</dbReference>
<dbReference type="SMR" id="Q0C8J3"/>
<dbReference type="STRING" id="341663.Q0C8J3"/>
<dbReference type="GlyCosmos" id="Q0C8J3">
    <property type="glycosylation" value="4 sites, No reported glycans"/>
</dbReference>
<dbReference type="EnsemblFungi" id="EAU29440">
    <property type="protein sequence ID" value="EAU29440"/>
    <property type="gene ID" value="ATEG_09991"/>
</dbReference>
<dbReference type="GeneID" id="4319511"/>
<dbReference type="VEuPathDB" id="FungiDB:ATEG_09991"/>
<dbReference type="eggNOG" id="ENOG502QS4Q">
    <property type="taxonomic scope" value="Eukaryota"/>
</dbReference>
<dbReference type="HOGENOM" id="CLU_031603_4_0_1"/>
<dbReference type="OMA" id="YHDGFSI"/>
<dbReference type="OrthoDB" id="406631at2759"/>
<dbReference type="Proteomes" id="UP000007963">
    <property type="component" value="Unassembled WGS sequence"/>
</dbReference>
<dbReference type="GO" id="GO:0005576">
    <property type="term" value="C:extracellular region"/>
    <property type="evidence" value="ECO:0007669"/>
    <property type="project" value="UniProtKB-SubCell"/>
</dbReference>
<dbReference type="GO" id="GO:0016985">
    <property type="term" value="F:mannan endo-1,4-beta-mannosidase activity"/>
    <property type="evidence" value="ECO:0007669"/>
    <property type="project" value="UniProtKB-EC"/>
</dbReference>
<dbReference type="GO" id="GO:0046355">
    <property type="term" value="P:mannan catabolic process"/>
    <property type="evidence" value="ECO:0007669"/>
    <property type="project" value="UniProtKB-ARBA"/>
</dbReference>
<dbReference type="FunFam" id="3.20.20.80:FF:000076">
    <property type="entry name" value="Mannan endo-1,4-beta-mannosidase A"/>
    <property type="match status" value="1"/>
</dbReference>
<dbReference type="Gene3D" id="3.20.20.80">
    <property type="entry name" value="Glycosidases"/>
    <property type="match status" value="1"/>
</dbReference>
<dbReference type="InterPro" id="IPR001547">
    <property type="entry name" value="Glyco_hydro_5"/>
</dbReference>
<dbReference type="InterPro" id="IPR017853">
    <property type="entry name" value="Glycoside_hydrolase_SF"/>
</dbReference>
<dbReference type="InterPro" id="IPR045053">
    <property type="entry name" value="MAN-like"/>
</dbReference>
<dbReference type="PANTHER" id="PTHR31451">
    <property type="match status" value="1"/>
</dbReference>
<dbReference type="PANTHER" id="PTHR31451:SF21">
    <property type="entry name" value="MANNAN ENDO-1,4-BETA-MANNOSIDASE C"/>
    <property type="match status" value="1"/>
</dbReference>
<dbReference type="Pfam" id="PF00150">
    <property type="entry name" value="Cellulase"/>
    <property type="match status" value="1"/>
</dbReference>
<dbReference type="SUPFAM" id="SSF51445">
    <property type="entry name" value="(Trans)glycosidases"/>
    <property type="match status" value="1"/>
</dbReference>
<protein>
    <recommendedName>
        <fullName>Probable mannan endo-1,4-beta-mannosidase C</fullName>
        <ecNumber>3.2.1.78</ecNumber>
    </recommendedName>
    <alternativeName>
        <fullName>Endo-beta-1,4-mannanase C</fullName>
    </alternativeName>
</protein>
<accession>Q0C8J3</accession>
<name>MANC_ASPTN</name>